<reference key="1">
    <citation type="journal article" date="2004" name="Science">
        <title>The Ashbya gossypii genome as a tool for mapping the ancient Saccharomyces cerevisiae genome.</title>
        <authorList>
            <person name="Dietrich F.S."/>
            <person name="Voegeli S."/>
            <person name="Brachat S."/>
            <person name="Lerch A."/>
            <person name="Gates K."/>
            <person name="Steiner S."/>
            <person name="Mohr C."/>
            <person name="Poehlmann R."/>
            <person name="Luedi P."/>
            <person name="Choi S."/>
            <person name="Wing R.A."/>
            <person name="Flavier A."/>
            <person name="Gaffney T.D."/>
            <person name="Philippsen P."/>
        </authorList>
    </citation>
    <scope>NUCLEOTIDE SEQUENCE [LARGE SCALE GENOMIC DNA]</scope>
    <source>
        <strain>ATCC 10895 / CBS 109.51 / FGSC 9923 / NRRL Y-1056</strain>
    </source>
</reference>
<reference key="2">
    <citation type="journal article" date="2013" name="G3 (Bethesda)">
        <title>Genomes of Ashbya fungi isolated from insects reveal four mating-type loci, numerous translocations, lack of transposons, and distinct gene duplications.</title>
        <authorList>
            <person name="Dietrich F.S."/>
            <person name="Voegeli S."/>
            <person name="Kuo S."/>
            <person name="Philippsen P."/>
        </authorList>
    </citation>
    <scope>GENOME REANNOTATION</scope>
    <scope>SEQUENCE REVISION TO 5; 77; 88; 97; 116; 151; 165 AND 448-470</scope>
    <source>
        <strain>ATCC 10895 / CBS 109.51 / FGSC 9923 / NRRL Y-1056</strain>
    </source>
</reference>
<proteinExistence type="inferred from homology"/>
<keyword id="KW-0256">Endoplasmic reticulum</keyword>
<keyword id="KW-0328">Glycosyltransferase</keyword>
<keyword id="KW-0472">Membrane</keyword>
<keyword id="KW-1185">Reference proteome</keyword>
<keyword id="KW-0808">Transferase</keyword>
<keyword id="KW-0812">Transmembrane</keyword>
<keyword id="KW-1133">Transmembrane helix</keyword>
<sequence>MAKRSEKTEGANKSGRRRGPGSDAEGAEDSGTRRYSLWNFWVASTALKLLLMPGYYSTDFEVHRNWLAVTHRLPLREWYVDATSQWTLDYPPLFAWFEWALSQVVPGAVRRDGCLELVAEGRYGWPTVVFQRLTVIASEVLLYVVLQVYVNRSAAQERTVNFVVATSVALSPAFLLVDHIHFQYNGFLFAVLVASIVAARERRYVLCGALFTVALCLKHIFLYLAPAYFVFLLRAYVLDLGEFRFRSYRDLVFAVRWGNLCRLGGVVLAIMAVTFAPFAGVMPQLMARLFPFSRGLTHAYWAPNFWAIYSFVDKVLTFLMLRVPYVYKLATSLVQPPLIPASIDEIRARMAAGNHGTRGLVQDVSFVILPQIQPKLTFLLTLFYQVLAVLPVLFDPSFKRFIGSLSLCGFSAFLFGWHVHEKAIMLVIVPFSFLVSFDQRLLTPFRLLTASGYVSLFPLLYSSSSFVIKVLYTLIWCIVYHSALKRTVPASASVQRRVFFFDRLAAVYVMLLLPMVLGVKYLELLEGKFEALEKYQFLGLMCYSIYCAIGVCTSWMGLSWLYNFDEPLWV</sequence>
<evidence type="ECO:0000250" key="1">
    <source>
        <dbReference type="UniProtKB" id="P40351"/>
    </source>
</evidence>
<evidence type="ECO:0000255" key="2"/>
<evidence type="ECO:0000256" key="3">
    <source>
        <dbReference type="SAM" id="MobiDB-lite"/>
    </source>
</evidence>
<evidence type="ECO:0000305" key="4"/>
<comment type="function">
    <text evidence="1">Dolichyl pyrophosphate Glc1Man9GlcNAc2 alpha-1,3-glucosyltransferase that operates in the biosynthetic pathway of dolichol-linked oligosaccharides, the glycan precursors employed in protein asparagine (N)-glycosylation. The assembly of dolichol-linked oligosaccharides begins on the cytosolic side of the endoplasmic reticulum membrane and finishes in its lumen. The sequential addition of sugars to dolichol pyrophosphate produces dolichol-linked oligosaccharides containing fourteen sugars, including two GlcNAcs, nine mannoses and three glucoses. Once assembled, the oligosaccharide is transferred from the lipid to nascent proteins by oligosaccharyltransferases. In the lumen of the endoplasmic reticulum, adds the second glucose residue from dolichyl phosphate glucose (Dol-P-Glc) onto the lipid-linked oligosaccharide intermediate Glc(1)Man(9)GlcNAc(2)-PP-Dol to produce Glc(2)Man(9)GlcNAc(2)-PP-Dol.</text>
</comment>
<comment type="catalytic activity">
    <reaction evidence="1">
        <text>an alpha-D-Glc-(1-&gt;3)-alpha-D-Man-(1-&gt;2)-alpha-D-Man-(1-&gt;2)-alpha-D-Man-(1-&gt;3)-[alpha-D-Man-(1-&gt;2)-alpha-D-Man-(1-&gt;3)-[alpha-D-Man-(1-&gt;2)-alpha-D-Man-(1-&gt;6)]-alpha-D-Man-(1-&gt;6)]-beta-D-Man-(1-&gt;4)-beta-D-GlcNAc-(1-&gt;4)-alpha-D-GlcNAc-diphospho-di-trans,poly-cis-dolichol + a di-trans,poly-cis-dolichyl beta-D-glucosyl phosphate = an alpha-D-Glc-(1-&gt;3)-alpha-D-Glc-(1-&gt;3)-alpha-D-Man-(1-&gt;2)-alpha-D-Man-(1-&gt;2)-alpha-D-Man-(1-&gt;3)-[alpha-D-Man-(1-&gt;2)-alpha-D-Man-(1-&gt;3)-[alpha-D-Man-(1-&gt;2)-alpha-D-Man-(1-&gt;6)]-alpha-D-Man-(1-&gt;6)]-beta-D-Man-(1-&gt;4)-beta-D-GlcNAc-(1-&gt;4)-alpha-D-GlcNAc-diphospho-di-trans,poly-cis-dolichol + a di-trans,poly-cis-dolichyl phosphate + H(+)</text>
        <dbReference type="Rhea" id="RHEA:31307"/>
        <dbReference type="Rhea" id="RHEA-COMP:19498"/>
        <dbReference type="Rhea" id="RHEA-COMP:19502"/>
        <dbReference type="Rhea" id="RHEA-COMP:19521"/>
        <dbReference type="Rhea" id="RHEA-COMP:19522"/>
        <dbReference type="ChEBI" id="CHEBI:15378"/>
        <dbReference type="ChEBI" id="CHEBI:57525"/>
        <dbReference type="ChEBI" id="CHEBI:57683"/>
        <dbReference type="ChEBI" id="CHEBI:132521"/>
        <dbReference type="ChEBI" id="CHEBI:132522"/>
        <dbReference type="EC" id="2.4.1.265"/>
    </reaction>
    <physiologicalReaction direction="left-to-right" evidence="1">
        <dbReference type="Rhea" id="RHEA:31308"/>
    </physiologicalReaction>
</comment>
<comment type="pathway">
    <text evidence="1">Protein modification; protein glycosylation.</text>
</comment>
<comment type="subcellular location">
    <subcellularLocation>
        <location evidence="1">Endoplasmic reticulum membrane</location>
        <topology evidence="2">Multi-pass membrane protein</topology>
    </subcellularLocation>
</comment>
<comment type="similarity">
    <text evidence="4">Belongs to the ALG6/ALG8 glucosyltransferase family.</text>
</comment>
<gene>
    <name type="primary">ALG8</name>
    <name type="ordered locus">ADR210C</name>
</gene>
<name>ALG8_EREGS</name>
<organism>
    <name type="scientific">Eremothecium gossypii (strain ATCC 10895 / CBS 109.51 / FGSC 9923 / NRRL Y-1056)</name>
    <name type="common">Yeast</name>
    <name type="synonym">Ashbya gossypii</name>
    <dbReference type="NCBI Taxonomy" id="284811"/>
    <lineage>
        <taxon>Eukaryota</taxon>
        <taxon>Fungi</taxon>
        <taxon>Dikarya</taxon>
        <taxon>Ascomycota</taxon>
        <taxon>Saccharomycotina</taxon>
        <taxon>Saccharomycetes</taxon>
        <taxon>Saccharomycetales</taxon>
        <taxon>Saccharomycetaceae</taxon>
        <taxon>Eremothecium</taxon>
    </lineage>
</organism>
<dbReference type="EC" id="2.4.1.265" evidence="1"/>
<dbReference type="EMBL" id="AE016817">
    <property type="protein sequence ID" value="AAS52130.2"/>
    <property type="molecule type" value="Genomic_DNA"/>
</dbReference>
<dbReference type="RefSeq" id="NP_984306.2">
    <property type="nucleotide sequence ID" value="NM_209659.2"/>
</dbReference>
<dbReference type="SMR" id="Q759R3"/>
<dbReference type="FunCoup" id="Q759R3">
    <property type="interactions" value="813"/>
</dbReference>
<dbReference type="STRING" id="284811.Q759R3"/>
<dbReference type="CAZy" id="GT57">
    <property type="family name" value="Glycosyltransferase Family 57"/>
</dbReference>
<dbReference type="EnsemblFungi" id="AAS52130">
    <property type="protein sequence ID" value="AAS52130"/>
    <property type="gene ID" value="AGOS_ADR210C"/>
</dbReference>
<dbReference type="GeneID" id="4620468"/>
<dbReference type="KEGG" id="ago:AGOS_ADR210C"/>
<dbReference type="eggNOG" id="KOG2576">
    <property type="taxonomic scope" value="Eukaryota"/>
</dbReference>
<dbReference type="HOGENOM" id="CLU_022045_1_1_1"/>
<dbReference type="InParanoid" id="Q759R3"/>
<dbReference type="OMA" id="YHSTDFD"/>
<dbReference type="OrthoDB" id="1689333at2759"/>
<dbReference type="UniPathway" id="UPA00378"/>
<dbReference type="Proteomes" id="UP000000591">
    <property type="component" value="Chromosome IV"/>
</dbReference>
<dbReference type="GO" id="GO:0005789">
    <property type="term" value="C:endoplasmic reticulum membrane"/>
    <property type="evidence" value="ECO:0000250"/>
    <property type="project" value="UniProtKB"/>
</dbReference>
<dbReference type="GO" id="GO:0042283">
    <property type="term" value="F:dolichyl pyrophosphate Glc1Man9GlcNAc2 alpha-1,3-glucosyltransferase activity"/>
    <property type="evidence" value="ECO:0000250"/>
    <property type="project" value="UniProtKB"/>
</dbReference>
<dbReference type="GO" id="GO:0006488">
    <property type="term" value="P:dolichol-linked oligosaccharide biosynthetic process"/>
    <property type="evidence" value="ECO:0000250"/>
    <property type="project" value="UniProtKB"/>
</dbReference>
<dbReference type="GO" id="GO:0006487">
    <property type="term" value="P:protein N-linked glycosylation"/>
    <property type="evidence" value="ECO:0000250"/>
    <property type="project" value="UniProtKB"/>
</dbReference>
<dbReference type="InterPro" id="IPR004856">
    <property type="entry name" value="Glyco_trans_ALG6/ALG8"/>
</dbReference>
<dbReference type="PANTHER" id="PTHR12413">
    <property type="entry name" value="DOLICHYL GLYCOSYLTRANSFERASE"/>
    <property type="match status" value="1"/>
</dbReference>
<dbReference type="PANTHER" id="PTHR12413:SF2">
    <property type="entry name" value="DOLICHYL PYROPHOSPHATE GLC1MAN9GLCNAC2 ALPHA-1,3-GLUCOSYLTRANSFERASE-RELATED"/>
    <property type="match status" value="1"/>
</dbReference>
<dbReference type="Pfam" id="PF03155">
    <property type="entry name" value="Alg6_Alg8"/>
    <property type="match status" value="1"/>
</dbReference>
<feature type="chain" id="PRO_0000278326" description="Dolichyl pyrophosphate Glc1Man9GlcNAc2 alpha-1,3-glucosyltransferase">
    <location>
        <begin position="1"/>
        <end position="570"/>
    </location>
</feature>
<feature type="topological domain" description="Lumenal" evidence="2">
    <location>
        <begin position="1"/>
        <end position="34"/>
    </location>
</feature>
<feature type="transmembrane region" description="Helical" evidence="2">
    <location>
        <begin position="35"/>
        <end position="55"/>
    </location>
</feature>
<feature type="topological domain" description="Cytoplasmic" evidence="2">
    <location>
        <begin position="56"/>
        <end position="127"/>
    </location>
</feature>
<feature type="transmembrane region" description="Helical" evidence="2">
    <location>
        <begin position="128"/>
        <end position="148"/>
    </location>
</feature>
<feature type="topological domain" description="Lumenal" evidence="2">
    <location>
        <begin position="149"/>
        <end position="161"/>
    </location>
</feature>
<feature type="transmembrane region" description="Helical" evidence="2">
    <location>
        <begin position="162"/>
        <end position="182"/>
    </location>
</feature>
<feature type="transmembrane region" description="Helical" evidence="2">
    <location>
        <begin position="183"/>
        <end position="199"/>
    </location>
</feature>
<feature type="topological domain" description="Lumenal" evidence="2">
    <location>
        <begin position="200"/>
        <end position="212"/>
    </location>
</feature>
<feature type="transmembrane region" description="Helical" evidence="2">
    <location>
        <begin position="213"/>
        <end position="233"/>
    </location>
</feature>
<feature type="topological domain" description="Cytoplasmic" evidence="2">
    <location>
        <begin position="234"/>
        <end position="262"/>
    </location>
</feature>
<feature type="transmembrane region" description="Helical" evidence="2">
    <location>
        <begin position="263"/>
        <end position="283"/>
    </location>
</feature>
<feature type="topological domain" description="Lumenal" evidence="2">
    <location>
        <begin position="284"/>
        <end position="300"/>
    </location>
</feature>
<feature type="transmembrane region" description="Helical" evidence="2">
    <location>
        <begin position="301"/>
        <end position="321"/>
    </location>
</feature>
<feature type="topological domain" description="Cytoplasmic" evidence="2">
    <location>
        <begin position="322"/>
        <end position="375"/>
    </location>
</feature>
<feature type="transmembrane region" description="Helical" evidence="2">
    <location>
        <begin position="376"/>
        <end position="396"/>
    </location>
</feature>
<feature type="topological domain" description="Lumenal" evidence="2">
    <location>
        <begin position="397"/>
        <end position="412"/>
    </location>
</feature>
<feature type="transmembrane region" description="Helical" evidence="2">
    <location>
        <begin position="413"/>
        <end position="433"/>
    </location>
</feature>
<feature type="topological domain" description="Cytoplasmic" evidence="2">
    <location>
        <begin position="434"/>
        <end position="458"/>
    </location>
</feature>
<feature type="transmembrane region" description="Helical" evidence="2">
    <location>
        <begin position="459"/>
        <end position="479"/>
    </location>
</feature>
<feature type="topological domain" description="Lumenal" evidence="2">
    <location>
        <begin position="480"/>
        <end position="497"/>
    </location>
</feature>
<feature type="transmembrane region" description="Helical" evidence="2">
    <location>
        <begin position="498"/>
        <end position="518"/>
    </location>
</feature>
<feature type="topological domain" description="Cytoplasmic" evidence="2">
    <location>
        <begin position="519"/>
        <end position="536"/>
    </location>
</feature>
<feature type="transmembrane region" description="Helical" evidence="2">
    <location>
        <begin position="537"/>
        <end position="557"/>
    </location>
</feature>
<feature type="topological domain" description="Lumenal" evidence="2">
    <location>
        <begin position="558"/>
        <end position="570"/>
    </location>
</feature>
<feature type="region of interest" description="Disordered" evidence="3">
    <location>
        <begin position="1"/>
        <end position="29"/>
    </location>
</feature>
<feature type="compositionally biased region" description="Basic and acidic residues" evidence="3">
    <location>
        <begin position="1"/>
        <end position="10"/>
    </location>
</feature>
<accession>Q759R3</accession>
<protein>
    <recommendedName>
        <fullName evidence="1">Dolichyl pyrophosphate Glc1Man9GlcNAc2 alpha-1,3-glucosyltransferase</fullName>
        <ecNumber evidence="1">2.4.1.265</ecNumber>
    </recommendedName>
    <alternativeName>
        <fullName>Asparagine-linked glycosylation protein 8</fullName>
    </alternativeName>
    <alternativeName>
        <fullName>Dol-P-Glc:Glc(1)Man(9)GlcNAc(2)-PP-dolichyl alpha-1,3-glucosyltransferase</fullName>
    </alternativeName>
    <alternativeName>
        <fullName>Dolichyl-P-Glc:Glc1Man9GlcNAc2-PP-dolichyl glucosyltransferase</fullName>
    </alternativeName>
</protein>